<sequence>MATKVQGKHAAEKENDDGLREKMIAVNRVSKVVKGGRTMSFAALSVVGDGDGRIGMGKGKAREVPVSVQKAMEQARRGMFKVALKNGTLHHTVVGKHGASTVLISPAAEGTGVIAGGPMRAIFEVMGVRNVVAKSLGSSNPYNLVRATLNGLRASLTPAEVAAKRGKSVEEILG</sequence>
<gene>
    <name evidence="1" type="primary">rpsE</name>
    <name type="ordered locus">BP3633</name>
</gene>
<proteinExistence type="inferred from homology"/>
<keyword id="KW-1185">Reference proteome</keyword>
<keyword id="KW-0687">Ribonucleoprotein</keyword>
<keyword id="KW-0689">Ribosomal protein</keyword>
<keyword id="KW-0694">RNA-binding</keyword>
<keyword id="KW-0699">rRNA-binding</keyword>
<comment type="function">
    <text evidence="1">With S4 and S12 plays an important role in translational accuracy.</text>
</comment>
<comment type="function">
    <text evidence="1">Located at the back of the 30S subunit body where it stabilizes the conformation of the head with respect to the body.</text>
</comment>
<comment type="subunit">
    <text evidence="1">Part of the 30S ribosomal subunit. Contacts proteins S4 and S8.</text>
</comment>
<comment type="domain">
    <text>The N-terminal domain interacts with the head of the 30S subunit; the C-terminal domain interacts with the body and contacts protein S4. The interaction surface between S4 and S5 is involved in control of translational fidelity.</text>
</comment>
<comment type="similarity">
    <text evidence="1">Belongs to the universal ribosomal protein uS5 family.</text>
</comment>
<protein>
    <recommendedName>
        <fullName evidence="1">Small ribosomal subunit protein uS5</fullName>
    </recommendedName>
    <alternativeName>
        <fullName evidence="2">30S ribosomal protein S5</fullName>
    </alternativeName>
</protein>
<reference key="1">
    <citation type="journal article" date="2003" name="Nat. Genet.">
        <title>Comparative analysis of the genome sequences of Bordetella pertussis, Bordetella parapertussis and Bordetella bronchiseptica.</title>
        <authorList>
            <person name="Parkhill J."/>
            <person name="Sebaihia M."/>
            <person name="Preston A."/>
            <person name="Murphy L.D."/>
            <person name="Thomson N.R."/>
            <person name="Harris D.E."/>
            <person name="Holden M.T.G."/>
            <person name="Churcher C.M."/>
            <person name="Bentley S.D."/>
            <person name="Mungall K.L."/>
            <person name="Cerdeno-Tarraga A.-M."/>
            <person name="Temple L."/>
            <person name="James K.D."/>
            <person name="Harris B."/>
            <person name="Quail M.A."/>
            <person name="Achtman M."/>
            <person name="Atkin R."/>
            <person name="Baker S."/>
            <person name="Basham D."/>
            <person name="Bason N."/>
            <person name="Cherevach I."/>
            <person name="Chillingworth T."/>
            <person name="Collins M."/>
            <person name="Cronin A."/>
            <person name="Davis P."/>
            <person name="Doggett J."/>
            <person name="Feltwell T."/>
            <person name="Goble A."/>
            <person name="Hamlin N."/>
            <person name="Hauser H."/>
            <person name="Holroyd S."/>
            <person name="Jagels K."/>
            <person name="Leather S."/>
            <person name="Moule S."/>
            <person name="Norberczak H."/>
            <person name="O'Neil S."/>
            <person name="Ormond D."/>
            <person name="Price C."/>
            <person name="Rabbinowitsch E."/>
            <person name="Rutter S."/>
            <person name="Sanders M."/>
            <person name="Saunders D."/>
            <person name="Seeger K."/>
            <person name="Sharp S."/>
            <person name="Simmonds M."/>
            <person name="Skelton J."/>
            <person name="Squares R."/>
            <person name="Squares S."/>
            <person name="Stevens K."/>
            <person name="Unwin L."/>
            <person name="Whitehead S."/>
            <person name="Barrell B.G."/>
            <person name="Maskell D.J."/>
        </authorList>
    </citation>
    <scope>NUCLEOTIDE SEQUENCE [LARGE SCALE GENOMIC DNA]</scope>
    <source>
        <strain>Tohama I / ATCC BAA-589 / NCTC 13251</strain>
    </source>
</reference>
<accession>Q7VTB4</accession>
<dbReference type="EMBL" id="BX640422">
    <property type="protein sequence ID" value="CAE43890.1"/>
    <property type="molecule type" value="Genomic_DNA"/>
</dbReference>
<dbReference type="RefSeq" id="NP_882142.1">
    <property type="nucleotide sequence ID" value="NC_002929.2"/>
</dbReference>
<dbReference type="RefSeq" id="WP_003806923.1">
    <property type="nucleotide sequence ID" value="NZ_CP039022.1"/>
</dbReference>
<dbReference type="SMR" id="Q7VTB4"/>
<dbReference type="STRING" id="257313.BP3633"/>
<dbReference type="PaxDb" id="257313-BP3633"/>
<dbReference type="GeneID" id="93206278"/>
<dbReference type="KEGG" id="bpe:BP3633"/>
<dbReference type="PATRIC" id="fig|257313.5.peg.3930"/>
<dbReference type="eggNOG" id="COG0098">
    <property type="taxonomic scope" value="Bacteria"/>
</dbReference>
<dbReference type="HOGENOM" id="CLU_065898_2_2_4"/>
<dbReference type="Proteomes" id="UP000002676">
    <property type="component" value="Chromosome"/>
</dbReference>
<dbReference type="GO" id="GO:0015935">
    <property type="term" value="C:small ribosomal subunit"/>
    <property type="evidence" value="ECO:0007669"/>
    <property type="project" value="InterPro"/>
</dbReference>
<dbReference type="GO" id="GO:0019843">
    <property type="term" value="F:rRNA binding"/>
    <property type="evidence" value="ECO:0007669"/>
    <property type="project" value="UniProtKB-UniRule"/>
</dbReference>
<dbReference type="GO" id="GO:0003735">
    <property type="term" value="F:structural constituent of ribosome"/>
    <property type="evidence" value="ECO:0007669"/>
    <property type="project" value="InterPro"/>
</dbReference>
<dbReference type="GO" id="GO:0006412">
    <property type="term" value="P:translation"/>
    <property type="evidence" value="ECO:0007669"/>
    <property type="project" value="UniProtKB-UniRule"/>
</dbReference>
<dbReference type="FunFam" id="3.30.160.20:FF:000001">
    <property type="entry name" value="30S ribosomal protein S5"/>
    <property type="match status" value="1"/>
</dbReference>
<dbReference type="FunFam" id="3.30.230.10:FF:000002">
    <property type="entry name" value="30S ribosomal protein S5"/>
    <property type="match status" value="1"/>
</dbReference>
<dbReference type="Gene3D" id="3.30.160.20">
    <property type="match status" value="1"/>
</dbReference>
<dbReference type="Gene3D" id="3.30.230.10">
    <property type="match status" value="1"/>
</dbReference>
<dbReference type="HAMAP" id="MF_01307_B">
    <property type="entry name" value="Ribosomal_uS5_B"/>
    <property type="match status" value="1"/>
</dbReference>
<dbReference type="InterPro" id="IPR020568">
    <property type="entry name" value="Ribosomal_Su5_D2-typ_SF"/>
</dbReference>
<dbReference type="InterPro" id="IPR000851">
    <property type="entry name" value="Ribosomal_uS5"/>
</dbReference>
<dbReference type="InterPro" id="IPR005712">
    <property type="entry name" value="Ribosomal_uS5_bac-type"/>
</dbReference>
<dbReference type="InterPro" id="IPR005324">
    <property type="entry name" value="Ribosomal_uS5_C"/>
</dbReference>
<dbReference type="InterPro" id="IPR013810">
    <property type="entry name" value="Ribosomal_uS5_N"/>
</dbReference>
<dbReference type="InterPro" id="IPR018192">
    <property type="entry name" value="Ribosomal_uS5_N_CS"/>
</dbReference>
<dbReference type="InterPro" id="IPR014721">
    <property type="entry name" value="Ribsml_uS5_D2-typ_fold_subgr"/>
</dbReference>
<dbReference type="NCBIfam" id="TIGR01021">
    <property type="entry name" value="rpsE_bact"/>
    <property type="match status" value="1"/>
</dbReference>
<dbReference type="PANTHER" id="PTHR48277">
    <property type="entry name" value="MITOCHONDRIAL RIBOSOMAL PROTEIN S5"/>
    <property type="match status" value="1"/>
</dbReference>
<dbReference type="PANTHER" id="PTHR48277:SF1">
    <property type="entry name" value="MITOCHONDRIAL RIBOSOMAL PROTEIN S5"/>
    <property type="match status" value="1"/>
</dbReference>
<dbReference type="Pfam" id="PF00333">
    <property type="entry name" value="Ribosomal_S5"/>
    <property type="match status" value="1"/>
</dbReference>
<dbReference type="Pfam" id="PF03719">
    <property type="entry name" value="Ribosomal_S5_C"/>
    <property type="match status" value="1"/>
</dbReference>
<dbReference type="SUPFAM" id="SSF54768">
    <property type="entry name" value="dsRNA-binding domain-like"/>
    <property type="match status" value="1"/>
</dbReference>
<dbReference type="SUPFAM" id="SSF54211">
    <property type="entry name" value="Ribosomal protein S5 domain 2-like"/>
    <property type="match status" value="1"/>
</dbReference>
<dbReference type="PROSITE" id="PS00585">
    <property type="entry name" value="RIBOSOMAL_S5"/>
    <property type="match status" value="1"/>
</dbReference>
<dbReference type="PROSITE" id="PS50881">
    <property type="entry name" value="S5_DSRBD"/>
    <property type="match status" value="1"/>
</dbReference>
<feature type="chain" id="PRO_0000131480" description="Small ribosomal subunit protein uS5">
    <location>
        <begin position="1"/>
        <end position="174"/>
    </location>
</feature>
<feature type="domain" description="S5 DRBM" evidence="1">
    <location>
        <begin position="19"/>
        <end position="82"/>
    </location>
</feature>
<evidence type="ECO:0000255" key="1">
    <source>
        <dbReference type="HAMAP-Rule" id="MF_01307"/>
    </source>
</evidence>
<evidence type="ECO:0000305" key="2"/>
<organism>
    <name type="scientific">Bordetella pertussis (strain Tohama I / ATCC BAA-589 / NCTC 13251)</name>
    <dbReference type="NCBI Taxonomy" id="257313"/>
    <lineage>
        <taxon>Bacteria</taxon>
        <taxon>Pseudomonadati</taxon>
        <taxon>Pseudomonadota</taxon>
        <taxon>Betaproteobacteria</taxon>
        <taxon>Burkholderiales</taxon>
        <taxon>Alcaligenaceae</taxon>
        <taxon>Bordetella</taxon>
    </lineage>
</organism>
<name>RS5_BORPE</name>